<keyword id="KW-0168">Coated pit</keyword>
<keyword id="KW-0968">Cytoplasmic vesicle</keyword>
<keyword id="KW-0254">Endocytosis</keyword>
<keyword id="KW-0333">Golgi apparatus</keyword>
<keyword id="KW-0472">Membrane</keyword>
<keyword id="KW-1185">Reference proteome</keyword>
<protein>
    <recommendedName>
        <fullName>Putative clathrin assembly protein At1g68110</fullName>
    </recommendedName>
</protein>
<proteinExistence type="evidence at transcript level"/>
<sequence>MKLWKRAAAAIKDRKSLLAVGFSRRNSSYRNADLEAAIIKATSHDDSSVDYSNAHRVYKWIRSSPLNLKTLVYAISSRVNHTRSWIVALKSLMLLHGVLCCKVPSVVGEFRRLPFDLSDFSDGHSCLSKTWGFNVFVRTYFAFLHHYSSFLSDQIHRLRGNNRRSLEKTSDSVIQELERIQKLQSLLDMILQIRPVADNMKKTLILEAMDCLVIESINIYGRICGAVMKVLPLAGKSEAATVLKIVNKTTSQGEDLIVYFEFCKGFGVSNAREIPQFVRIPEEEVEAIEKMIDTVQEKPKLEKDEEKEDEKAMVVLEQPKKLQTIITDKWEIFEDDYRCFDRKDKWEIFEDEYHQNHLPLITMNQPVYITYTMPDLITF</sequence>
<evidence type="ECO:0000250" key="1"/>
<evidence type="ECO:0000255" key="2">
    <source>
        <dbReference type="PROSITE-ProRule" id="PRU00243"/>
    </source>
</evidence>
<accession>Q9C9X5</accession>
<dbReference type="EMBL" id="AC012563">
    <property type="protein sequence ID" value="AAG52005.1"/>
    <property type="molecule type" value="Genomic_DNA"/>
</dbReference>
<dbReference type="EMBL" id="CP002684">
    <property type="protein sequence ID" value="AEE34750.1"/>
    <property type="molecule type" value="Genomic_DNA"/>
</dbReference>
<dbReference type="EMBL" id="AF410278">
    <property type="protein sequence ID" value="AAK95264.1"/>
    <property type="molecule type" value="mRNA"/>
</dbReference>
<dbReference type="EMBL" id="AY149923">
    <property type="protein sequence ID" value="AAN31077.1"/>
    <property type="molecule type" value="mRNA"/>
</dbReference>
<dbReference type="PIR" id="D96704">
    <property type="entry name" value="D96704"/>
</dbReference>
<dbReference type="RefSeq" id="NP_564922.1">
    <property type="nucleotide sequence ID" value="NM_105481.2"/>
</dbReference>
<dbReference type="SMR" id="Q9C9X5"/>
<dbReference type="FunCoup" id="Q9C9X5">
    <property type="interactions" value="40"/>
</dbReference>
<dbReference type="STRING" id="3702.Q9C9X5"/>
<dbReference type="PaxDb" id="3702-AT1G68110.1"/>
<dbReference type="EnsemblPlants" id="AT1G68110.1">
    <property type="protein sequence ID" value="AT1G68110.1"/>
    <property type="gene ID" value="AT1G68110"/>
</dbReference>
<dbReference type="GeneID" id="843139"/>
<dbReference type="Gramene" id="AT1G68110.1">
    <property type="protein sequence ID" value="AT1G68110.1"/>
    <property type="gene ID" value="AT1G68110"/>
</dbReference>
<dbReference type="KEGG" id="ath:AT1G68110"/>
<dbReference type="Araport" id="AT1G68110"/>
<dbReference type="TAIR" id="AT1G68110">
    <property type="gene designation" value="CLAP"/>
</dbReference>
<dbReference type="eggNOG" id="KOG0251">
    <property type="taxonomic scope" value="Eukaryota"/>
</dbReference>
<dbReference type="HOGENOM" id="CLU_057422_1_0_1"/>
<dbReference type="InParanoid" id="Q9C9X5"/>
<dbReference type="OMA" id="HHYSSFL"/>
<dbReference type="OrthoDB" id="682511at2759"/>
<dbReference type="PhylomeDB" id="Q9C9X5"/>
<dbReference type="PRO" id="PR:Q9C9X5"/>
<dbReference type="Proteomes" id="UP000006548">
    <property type="component" value="Chromosome 1"/>
</dbReference>
<dbReference type="ExpressionAtlas" id="Q9C9X5">
    <property type="expression patterns" value="baseline and differential"/>
</dbReference>
<dbReference type="GO" id="GO:0005905">
    <property type="term" value="C:clathrin-coated pit"/>
    <property type="evidence" value="ECO:0007669"/>
    <property type="project" value="UniProtKB-SubCell"/>
</dbReference>
<dbReference type="GO" id="GO:0030136">
    <property type="term" value="C:clathrin-coated vesicle"/>
    <property type="evidence" value="ECO:0007669"/>
    <property type="project" value="UniProtKB-SubCell"/>
</dbReference>
<dbReference type="GO" id="GO:0005794">
    <property type="term" value="C:Golgi apparatus"/>
    <property type="evidence" value="ECO:0007669"/>
    <property type="project" value="UniProtKB-SubCell"/>
</dbReference>
<dbReference type="GO" id="GO:0005545">
    <property type="term" value="F:1-phosphatidylinositol binding"/>
    <property type="evidence" value="ECO:0007669"/>
    <property type="project" value="InterPro"/>
</dbReference>
<dbReference type="GO" id="GO:0004016">
    <property type="term" value="F:adenylate cyclase activity"/>
    <property type="evidence" value="ECO:0000314"/>
    <property type="project" value="TAIR"/>
</dbReference>
<dbReference type="GO" id="GO:0030276">
    <property type="term" value="F:clathrin binding"/>
    <property type="evidence" value="ECO:0007669"/>
    <property type="project" value="InterPro"/>
</dbReference>
<dbReference type="GO" id="GO:0048268">
    <property type="term" value="P:clathrin coat assembly"/>
    <property type="evidence" value="ECO:0007669"/>
    <property type="project" value="InterPro"/>
</dbReference>
<dbReference type="GO" id="GO:0072583">
    <property type="term" value="P:clathrin-dependent endocytosis"/>
    <property type="evidence" value="ECO:0007669"/>
    <property type="project" value="InterPro"/>
</dbReference>
<dbReference type="GO" id="GO:0050832">
    <property type="term" value="P:defense response to fungus"/>
    <property type="evidence" value="ECO:0000270"/>
    <property type="project" value="TAIR"/>
</dbReference>
<dbReference type="GO" id="GO:0016192">
    <property type="term" value="P:vesicle-mediated transport"/>
    <property type="evidence" value="ECO:0000270"/>
    <property type="project" value="TAIR"/>
</dbReference>
<dbReference type="CDD" id="cd16987">
    <property type="entry name" value="ANTH_N_AP180_plant"/>
    <property type="match status" value="1"/>
</dbReference>
<dbReference type="FunFam" id="1.25.40.90:FF:000027">
    <property type="entry name" value="Putative clathrin assembly protein"/>
    <property type="match status" value="1"/>
</dbReference>
<dbReference type="Gene3D" id="1.25.40.90">
    <property type="match status" value="1"/>
</dbReference>
<dbReference type="Gene3D" id="1.20.58.150">
    <property type="entry name" value="ANTH domain"/>
    <property type="match status" value="1"/>
</dbReference>
<dbReference type="InterPro" id="IPR011417">
    <property type="entry name" value="ANTH_dom"/>
</dbReference>
<dbReference type="InterPro" id="IPR014712">
    <property type="entry name" value="ANTH_dom_sf"/>
</dbReference>
<dbReference type="InterPro" id="IPR048050">
    <property type="entry name" value="ANTH_N_plant"/>
</dbReference>
<dbReference type="InterPro" id="IPR045192">
    <property type="entry name" value="AP180-like"/>
</dbReference>
<dbReference type="InterPro" id="IPR013809">
    <property type="entry name" value="ENTH"/>
</dbReference>
<dbReference type="InterPro" id="IPR008942">
    <property type="entry name" value="ENTH_VHS"/>
</dbReference>
<dbReference type="PANTHER" id="PTHR22951">
    <property type="entry name" value="CLATHRIN ASSEMBLY PROTEIN"/>
    <property type="match status" value="1"/>
</dbReference>
<dbReference type="PANTHER" id="PTHR22951:SF71">
    <property type="entry name" value="ENTH DOMAIN-CONTAINING PROTEIN"/>
    <property type="match status" value="1"/>
</dbReference>
<dbReference type="Pfam" id="PF07651">
    <property type="entry name" value="ANTH"/>
    <property type="match status" value="1"/>
</dbReference>
<dbReference type="SMART" id="SM00273">
    <property type="entry name" value="ENTH"/>
    <property type="match status" value="1"/>
</dbReference>
<dbReference type="SUPFAM" id="SSF48464">
    <property type="entry name" value="ENTH/VHS domain"/>
    <property type="match status" value="1"/>
</dbReference>
<dbReference type="SUPFAM" id="SSF89009">
    <property type="entry name" value="GAT-like domain"/>
    <property type="match status" value="1"/>
</dbReference>
<dbReference type="PROSITE" id="PS50942">
    <property type="entry name" value="ENTH"/>
    <property type="match status" value="1"/>
</dbReference>
<comment type="subcellular location">
    <subcellularLocation>
        <location evidence="1">Membrane</location>
        <location evidence="1">Clathrin-coated pit</location>
    </subcellularLocation>
    <subcellularLocation>
        <location evidence="1">Golgi apparatus</location>
    </subcellularLocation>
    <subcellularLocation>
        <location evidence="1">Cytoplasmic vesicle</location>
        <location evidence="1">Clathrin-coated vesicle</location>
    </subcellularLocation>
    <text evidence="1">Colocalized with clathrin in the Golgi area.</text>
</comment>
<gene>
    <name type="ordered locus">At1g68110</name>
    <name type="ORF">T23K23.4</name>
</gene>
<feature type="chain" id="PRO_0000187078" description="Putative clathrin assembly protein At1g68110">
    <location>
        <begin position="1"/>
        <end position="379"/>
    </location>
</feature>
<feature type="domain" description="ENTH" evidence="2">
    <location>
        <begin position="26"/>
        <end position="158"/>
    </location>
</feature>
<name>CAP12_ARATH</name>
<reference key="1">
    <citation type="journal article" date="2000" name="Nature">
        <title>Sequence and analysis of chromosome 1 of the plant Arabidopsis thaliana.</title>
        <authorList>
            <person name="Theologis A."/>
            <person name="Ecker J.R."/>
            <person name="Palm C.J."/>
            <person name="Federspiel N.A."/>
            <person name="Kaul S."/>
            <person name="White O."/>
            <person name="Alonso J."/>
            <person name="Altafi H."/>
            <person name="Araujo R."/>
            <person name="Bowman C.L."/>
            <person name="Brooks S.Y."/>
            <person name="Buehler E."/>
            <person name="Chan A."/>
            <person name="Chao Q."/>
            <person name="Chen H."/>
            <person name="Cheuk R.F."/>
            <person name="Chin C.W."/>
            <person name="Chung M.K."/>
            <person name="Conn L."/>
            <person name="Conway A.B."/>
            <person name="Conway A.R."/>
            <person name="Creasy T.H."/>
            <person name="Dewar K."/>
            <person name="Dunn P."/>
            <person name="Etgu P."/>
            <person name="Feldblyum T.V."/>
            <person name="Feng J.-D."/>
            <person name="Fong B."/>
            <person name="Fujii C.Y."/>
            <person name="Gill J.E."/>
            <person name="Goldsmith A.D."/>
            <person name="Haas B."/>
            <person name="Hansen N.F."/>
            <person name="Hughes B."/>
            <person name="Huizar L."/>
            <person name="Hunter J.L."/>
            <person name="Jenkins J."/>
            <person name="Johnson-Hopson C."/>
            <person name="Khan S."/>
            <person name="Khaykin E."/>
            <person name="Kim C.J."/>
            <person name="Koo H.L."/>
            <person name="Kremenetskaia I."/>
            <person name="Kurtz D.B."/>
            <person name="Kwan A."/>
            <person name="Lam B."/>
            <person name="Langin-Hooper S."/>
            <person name="Lee A."/>
            <person name="Lee J.M."/>
            <person name="Lenz C.A."/>
            <person name="Li J.H."/>
            <person name="Li Y.-P."/>
            <person name="Lin X."/>
            <person name="Liu S.X."/>
            <person name="Liu Z.A."/>
            <person name="Luros J.S."/>
            <person name="Maiti R."/>
            <person name="Marziali A."/>
            <person name="Militscher J."/>
            <person name="Miranda M."/>
            <person name="Nguyen M."/>
            <person name="Nierman W.C."/>
            <person name="Osborne B.I."/>
            <person name="Pai G."/>
            <person name="Peterson J."/>
            <person name="Pham P.K."/>
            <person name="Rizzo M."/>
            <person name="Rooney T."/>
            <person name="Rowley D."/>
            <person name="Sakano H."/>
            <person name="Salzberg S.L."/>
            <person name="Schwartz J.R."/>
            <person name="Shinn P."/>
            <person name="Southwick A.M."/>
            <person name="Sun H."/>
            <person name="Tallon L.J."/>
            <person name="Tambunga G."/>
            <person name="Toriumi M.J."/>
            <person name="Town C.D."/>
            <person name="Utterback T."/>
            <person name="Van Aken S."/>
            <person name="Vaysberg M."/>
            <person name="Vysotskaia V.S."/>
            <person name="Walker M."/>
            <person name="Wu D."/>
            <person name="Yu G."/>
            <person name="Fraser C.M."/>
            <person name="Venter J.C."/>
            <person name="Davis R.W."/>
        </authorList>
    </citation>
    <scope>NUCLEOTIDE SEQUENCE [LARGE SCALE GENOMIC DNA]</scope>
    <source>
        <strain>cv. Columbia</strain>
    </source>
</reference>
<reference key="2">
    <citation type="journal article" date="2017" name="Plant J.">
        <title>Araport11: a complete reannotation of the Arabidopsis thaliana reference genome.</title>
        <authorList>
            <person name="Cheng C.Y."/>
            <person name="Krishnakumar V."/>
            <person name="Chan A.P."/>
            <person name="Thibaud-Nissen F."/>
            <person name="Schobel S."/>
            <person name="Town C.D."/>
        </authorList>
    </citation>
    <scope>GENOME REANNOTATION</scope>
    <source>
        <strain>cv. Columbia</strain>
    </source>
</reference>
<reference key="3">
    <citation type="journal article" date="2003" name="Science">
        <title>Empirical analysis of transcriptional activity in the Arabidopsis genome.</title>
        <authorList>
            <person name="Yamada K."/>
            <person name="Lim J."/>
            <person name="Dale J.M."/>
            <person name="Chen H."/>
            <person name="Shinn P."/>
            <person name="Palm C.J."/>
            <person name="Southwick A.M."/>
            <person name="Wu H.C."/>
            <person name="Kim C.J."/>
            <person name="Nguyen M."/>
            <person name="Pham P.K."/>
            <person name="Cheuk R.F."/>
            <person name="Karlin-Newmann G."/>
            <person name="Liu S.X."/>
            <person name="Lam B."/>
            <person name="Sakano H."/>
            <person name="Wu T."/>
            <person name="Yu G."/>
            <person name="Miranda M."/>
            <person name="Quach H.L."/>
            <person name="Tripp M."/>
            <person name="Chang C.H."/>
            <person name="Lee J.M."/>
            <person name="Toriumi M.J."/>
            <person name="Chan M.M."/>
            <person name="Tang C.C."/>
            <person name="Onodera C.S."/>
            <person name="Deng J.M."/>
            <person name="Akiyama K."/>
            <person name="Ansari Y."/>
            <person name="Arakawa T."/>
            <person name="Banh J."/>
            <person name="Banno F."/>
            <person name="Bowser L."/>
            <person name="Brooks S.Y."/>
            <person name="Carninci P."/>
            <person name="Chao Q."/>
            <person name="Choy N."/>
            <person name="Enju A."/>
            <person name="Goldsmith A.D."/>
            <person name="Gurjal M."/>
            <person name="Hansen N.F."/>
            <person name="Hayashizaki Y."/>
            <person name="Johnson-Hopson C."/>
            <person name="Hsuan V.W."/>
            <person name="Iida K."/>
            <person name="Karnes M."/>
            <person name="Khan S."/>
            <person name="Koesema E."/>
            <person name="Ishida J."/>
            <person name="Jiang P.X."/>
            <person name="Jones T."/>
            <person name="Kawai J."/>
            <person name="Kamiya A."/>
            <person name="Meyers C."/>
            <person name="Nakajima M."/>
            <person name="Narusaka M."/>
            <person name="Seki M."/>
            <person name="Sakurai T."/>
            <person name="Satou M."/>
            <person name="Tamse R."/>
            <person name="Vaysberg M."/>
            <person name="Wallender E.K."/>
            <person name="Wong C."/>
            <person name="Yamamura Y."/>
            <person name="Yuan S."/>
            <person name="Shinozaki K."/>
            <person name="Davis R.W."/>
            <person name="Theologis A."/>
            <person name="Ecker J.R."/>
        </authorList>
    </citation>
    <scope>NUCLEOTIDE SEQUENCE [LARGE SCALE MRNA]</scope>
    <source>
        <strain>cv. Columbia</strain>
    </source>
</reference>
<organism>
    <name type="scientific">Arabidopsis thaliana</name>
    <name type="common">Mouse-ear cress</name>
    <dbReference type="NCBI Taxonomy" id="3702"/>
    <lineage>
        <taxon>Eukaryota</taxon>
        <taxon>Viridiplantae</taxon>
        <taxon>Streptophyta</taxon>
        <taxon>Embryophyta</taxon>
        <taxon>Tracheophyta</taxon>
        <taxon>Spermatophyta</taxon>
        <taxon>Magnoliopsida</taxon>
        <taxon>eudicotyledons</taxon>
        <taxon>Gunneridae</taxon>
        <taxon>Pentapetalae</taxon>
        <taxon>rosids</taxon>
        <taxon>malvids</taxon>
        <taxon>Brassicales</taxon>
        <taxon>Brassicaceae</taxon>
        <taxon>Camelineae</taxon>
        <taxon>Arabidopsis</taxon>
    </lineage>
</organism>